<organism>
    <name type="scientific">Pyrococcus horikoshii (strain ATCC 700860 / DSM 12428 / JCM 9974 / NBRC 100139 / OT-3)</name>
    <dbReference type="NCBI Taxonomy" id="70601"/>
    <lineage>
        <taxon>Archaea</taxon>
        <taxon>Methanobacteriati</taxon>
        <taxon>Methanobacteriota</taxon>
        <taxon>Thermococci</taxon>
        <taxon>Thermococcales</taxon>
        <taxon>Thermococcaceae</taxon>
        <taxon>Pyrococcus</taxon>
    </lineage>
</organism>
<feature type="initiator methionine" description="Removed" evidence="1">
    <location>
        <position position="1"/>
    </location>
</feature>
<feature type="chain" id="PRO_0000113074" description="Ornithine carbamoyltransferase">
    <location>
        <begin position="2"/>
        <end position="317"/>
    </location>
</feature>
<feature type="binding site" evidence="2">
    <location>
        <begin position="57"/>
        <end position="60"/>
    </location>
    <ligand>
        <name>carbamoyl phosphate</name>
        <dbReference type="ChEBI" id="CHEBI:58228"/>
    </ligand>
</feature>
<feature type="binding site" evidence="2">
    <location>
        <position position="84"/>
    </location>
    <ligand>
        <name>carbamoyl phosphate</name>
        <dbReference type="ChEBI" id="CHEBI:58228"/>
    </ligand>
</feature>
<feature type="binding site" evidence="2">
    <location>
        <position position="108"/>
    </location>
    <ligand>
        <name>carbamoyl phosphate</name>
        <dbReference type="ChEBI" id="CHEBI:58228"/>
    </ligand>
</feature>
<feature type="binding site" evidence="2">
    <location>
        <begin position="135"/>
        <end position="138"/>
    </location>
    <ligand>
        <name>carbamoyl phosphate</name>
        <dbReference type="ChEBI" id="CHEBI:58228"/>
    </ligand>
</feature>
<feature type="binding site" evidence="2">
    <location>
        <position position="166"/>
    </location>
    <ligand>
        <name>L-ornithine</name>
        <dbReference type="ChEBI" id="CHEBI:46911"/>
    </ligand>
</feature>
<feature type="binding site" evidence="2">
    <location>
        <position position="230"/>
    </location>
    <ligand>
        <name>L-ornithine</name>
        <dbReference type="ChEBI" id="CHEBI:46911"/>
    </ligand>
</feature>
<feature type="binding site" evidence="2">
    <location>
        <begin position="234"/>
        <end position="235"/>
    </location>
    <ligand>
        <name>L-ornithine</name>
        <dbReference type="ChEBI" id="CHEBI:46911"/>
    </ligand>
</feature>
<feature type="binding site" evidence="2">
    <location>
        <begin position="270"/>
        <end position="271"/>
    </location>
    <ligand>
        <name>carbamoyl phosphate</name>
        <dbReference type="ChEBI" id="CHEBI:58228"/>
    </ligand>
</feature>
<feature type="binding site" evidence="2">
    <location>
        <position position="298"/>
    </location>
    <ligand>
        <name>carbamoyl phosphate</name>
        <dbReference type="ChEBI" id="CHEBI:58228"/>
    </ligand>
</feature>
<dbReference type="EC" id="2.1.3.3" evidence="2"/>
<dbReference type="EMBL" id="BA000001">
    <property type="protein sequence ID" value="BAA29817.1"/>
    <property type="molecule type" value="Genomic_DNA"/>
</dbReference>
<dbReference type="PIR" id="G71119">
    <property type="entry name" value="G71119"/>
</dbReference>
<dbReference type="RefSeq" id="WP_010884824.1">
    <property type="nucleotide sequence ID" value="NC_000961.1"/>
</dbReference>
<dbReference type="SMR" id="O58457"/>
<dbReference type="STRING" id="70601.gene:9377673"/>
<dbReference type="EnsemblBacteria" id="BAA29817">
    <property type="protein sequence ID" value="BAA29817"/>
    <property type="gene ID" value="BAA29817"/>
</dbReference>
<dbReference type="GeneID" id="1443059"/>
<dbReference type="KEGG" id="pho:PH0726"/>
<dbReference type="eggNOG" id="arCOG00912">
    <property type="taxonomic scope" value="Archaea"/>
</dbReference>
<dbReference type="OrthoDB" id="4696at2157"/>
<dbReference type="UniPathway" id="UPA00068">
    <property type="reaction ID" value="UER00112"/>
</dbReference>
<dbReference type="Proteomes" id="UP000000752">
    <property type="component" value="Chromosome"/>
</dbReference>
<dbReference type="GO" id="GO:0005737">
    <property type="term" value="C:cytoplasm"/>
    <property type="evidence" value="ECO:0007669"/>
    <property type="project" value="UniProtKB-SubCell"/>
</dbReference>
<dbReference type="GO" id="GO:0016597">
    <property type="term" value="F:amino acid binding"/>
    <property type="evidence" value="ECO:0007669"/>
    <property type="project" value="InterPro"/>
</dbReference>
<dbReference type="GO" id="GO:0004585">
    <property type="term" value="F:ornithine carbamoyltransferase activity"/>
    <property type="evidence" value="ECO:0007669"/>
    <property type="project" value="UniProtKB-UniRule"/>
</dbReference>
<dbReference type="GO" id="GO:0042450">
    <property type="term" value="P:arginine biosynthetic process via ornithine"/>
    <property type="evidence" value="ECO:0007669"/>
    <property type="project" value="TreeGrafter"/>
</dbReference>
<dbReference type="GO" id="GO:0019240">
    <property type="term" value="P:citrulline biosynthetic process"/>
    <property type="evidence" value="ECO:0007669"/>
    <property type="project" value="TreeGrafter"/>
</dbReference>
<dbReference type="GO" id="GO:0006526">
    <property type="term" value="P:L-arginine biosynthetic process"/>
    <property type="evidence" value="ECO:0007669"/>
    <property type="project" value="UniProtKB-UniRule"/>
</dbReference>
<dbReference type="FunFam" id="3.40.50.1370:FF:000008">
    <property type="entry name" value="Ornithine carbamoyltransferase"/>
    <property type="match status" value="1"/>
</dbReference>
<dbReference type="FunFam" id="3.40.50.1370:FF:000016">
    <property type="entry name" value="Ornithine carbamoyltransferase"/>
    <property type="match status" value="1"/>
</dbReference>
<dbReference type="Gene3D" id="3.40.50.1370">
    <property type="entry name" value="Aspartate/ornithine carbamoyltransferase"/>
    <property type="match status" value="2"/>
</dbReference>
<dbReference type="HAMAP" id="MF_01109">
    <property type="entry name" value="OTCase"/>
    <property type="match status" value="1"/>
</dbReference>
<dbReference type="InterPro" id="IPR006132">
    <property type="entry name" value="Asp/Orn_carbamoyltranf_P-bd"/>
</dbReference>
<dbReference type="InterPro" id="IPR006130">
    <property type="entry name" value="Asp/Orn_carbamoylTrfase"/>
</dbReference>
<dbReference type="InterPro" id="IPR036901">
    <property type="entry name" value="Asp/Orn_carbamoylTrfase_sf"/>
</dbReference>
<dbReference type="InterPro" id="IPR006131">
    <property type="entry name" value="Asp_carbamoyltransf_Asp/Orn-bd"/>
</dbReference>
<dbReference type="InterPro" id="IPR002292">
    <property type="entry name" value="Orn/put_carbamltrans"/>
</dbReference>
<dbReference type="InterPro" id="IPR024904">
    <property type="entry name" value="OTCase_ArgI"/>
</dbReference>
<dbReference type="NCBIfam" id="TIGR00658">
    <property type="entry name" value="orni_carb_tr"/>
    <property type="match status" value="1"/>
</dbReference>
<dbReference type="NCBIfam" id="NF001986">
    <property type="entry name" value="PRK00779.1"/>
    <property type="match status" value="1"/>
</dbReference>
<dbReference type="PANTHER" id="PTHR45753">
    <property type="entry name" value="ORNITHINE CARBAMOYLTRANSFERASE, MITOCHONDRIAL"/>
    <property type="match status" value="1"/>
</dbReference>
<dbReference type="PANTHER" id="PTHR45753:SF3">
    <property type="entry name" value="ORNITHINE TRANSCARBAMYLASE, MITOCHONDRIAL"/>
    <property type="match status" value="1"/>
</dbReference>
<dbReference type="Pfam" id="PF00185">
    <property type="entry name" value="OTCace"/>
    <property type="match status" value="1"/>
</dbReference>
<dbReference type="Pfam" id="PF02729">
    <property type="entry name" value="OTCace_N"/>
    <property type="match status" value="1"/>
</dbReference>
<dbReference type="PRINTS" id="PR00100">
    <property type="entry name" value="AOTCASE"/>
</dbReference>
<dbReference type="PRINTS" id="PR00102">
    <property type="entry name" value="OTCASE"/>
</dbReference>
<dbReference type="SUPFAM" id="SSF53671">
    <property type="entry name" value="Aspartate/ornithine carbamoyltransferase"/>
    <property type="match status" value="1"/>
</dbReference>
<dbReference type="PROSITE" id="PS00097">
    <property type="entry name" value="CARBAMOYLTRANSFERASE"/>
    <property type="match status" value="1"/>
</dbReference>
<proteinExistence type="inferred from homology"/>
<name>OTC_PYRHO</name>
<sequence length="317" mass="35369">MVVSLKGRDLLCLQDYTPEEIWTILETAKMFKIWQKIGKPHRLLEGKTLAMIFQKPSTRTRVSFEVAMAHLGGHALYLNAQDLQLRRGETIADTARVLSRYVDAIMARVYAHKDVEDLAKYASVPVINGLSDFSHPCQALADYMTIWEKKGTIKGVKVVYVGDGNNVCHSLMIAGTKLGADVVVATPEGYEPDKKVIKWAEQNAAESGGSFELLHDPVKAVKDADVIYTDVWASMGQEAEAEERRKIFRPFQVNKDLVKHAKSDYMFMHCLPAHRGEEVTDDVIDSPNSVVWDEAENRLHAQKAVLALLLGGVKTGF</sequence>
<evidence type="ECO:0000250" key="1"/>
<evidence type="ECO:0000255" key="2">
    <source>
        <dbReference type="HAMAP-Rule" id="MF_01109"/>
    </source>
</evidence>
<protein>
    <recommendedName>
        <fullName evidence="2">Ornithine carbamoyltransferase</fullName>
        <shortName evidence="2">OTCase</shortName>
        <ecNumber evidence="2">2.1.3.3</ecNumber>
    </recommendedName>
</protein>
<accession>O58457</accession>
<gene>
    <name evidence="2" type="primary">argF</name>
    <name type="ordered locus">PH0726</name>
</gene>
<keyword id="KW-0028">Amino-acid biosynthesis</keyword>
<keyword id="KW-0055">Arginine biosynthesis</keyword>
<keyword id="KW-0963">Cytoplasm</keyword>
<keyword id="KW-0808">Transferase</keyword>
<reference key="1">
    <citation type="journal article" date="1998" name="DNA Res.">
        <title>Complete sequence and gene organization of the genome of a hyper-thermophilic archaebacterium, Pyrococcus horikoshii OT3.</title>
        <authorList>
            <person name="Kawarabayasi Y."/>
            <person name="Sawada M."/>
            <person name="Horikawa H."/>
            <person name="Haikawa Y."/>
            <person name="Hino Y."/>
            <person name="Yamamoto S."/>
            <person name="Sekine M."/>
            <person name="Baba S."/>
            <person name="Kosugi H."/>
            <person name="Hosoyama A."/>
            <person name="Nagai Y."/>
            <person name="Sakai M."/>
            <person name="Ogura K."/>
            <person name="Otsuka R."/>
            <person name="Nakazawa H."/>
            <person name="Takamiya M."/>
            <person name="Ohfuku Y."/>
            <person name="Funahashi T."/>
            <person name="Tanaka T."/>
            <person name="Kudoh Y."/>
            <person name="Yamazaki J."/>
            <person name="Kushida N."/>
            <person name="Oguchi A."/>
            <person name="Aoki K."/>
            <person name="Yoshizawa T."/>
            <person name="Nakamura Y."/>
            <person name="Robb F.T."/>
            <person name="Horikoshi K."/>
            <person name="Masuchi Y."/>
            <person name="Shizuya H."/>
            <person name="Kikuchi H."/>
        </authorList>
    </citation>
    <scope>NUCLEOTIDE SEQUENCE [LARGE SCALE GENOMIC DNA]</scope>
    <source>
        <strain>ATCC 700860 / DSM 12428 / JCM 9974 / NBRC 100139 / OT-3</strain>
    </source>
</reference>
<comment type="function">
    <text evidence="1">Reversibly catalyzes the transfer of the carbamoyl group from carbamoyl phosphate (CP) to the N(epsilon) atom of ornithine (ORN) to produce L-citrulline.</text>
</comment>
<comment type="catalytic activity">
    <reaction evidence="2">
        <text>carbamoyl phosphate + L-ornithine = L-citrulline + phosphate + H(+)</text>
        <dbReference type="Rhea" id="RHEA:19513"/>
        <dbReference type="ChEBI" id="CHEBI:15378"/>
        <dbReference type="ChEBI" id="CHEBI:43474"/>
        <dbReference type="ChEBI" id="CHEBI:46911"/>
        <dbReference type="ChEBI" id="CHEBI:57743"/>
        <dbReference type="ChEBI" id="CHEBI:58228"/>
        <dbReference type="EC" id="2.1.3.3"/>
    </reaction>
</comment>
<comment type="pathway">
    <text evidence="2">Amino-acid biosynthesis; L-arginine biosynthesis; L-arginine from L-ornithine and carbamoyl phosphate: step 1/3.</text>
</comment>
<comment type="subunit">
    <text evidence="1">Homododecamer.</text>
</comment>
<comment type="subcellular location">
    <subcellularLocation>
        <location evidence="2">Cytoplasm</location>
    </subcellularLocation>
</comment>
<comment type="similarity">
    <text evidence="2">Belongs to the aspartate/ornithine carbamoyltransferase superfamily. OTCase family.</text>
</comment>